<reference key="1">
    <citation type="journal article" date="1998" name="DNA Res.">
        <title>Complete sequence and gene organization of the genome of a hyper-thermophilic archaebacterium, Pyrococcus horikoshii OT3.</title>
        <authorList>
            <person name="Kawarabayasi Y."/>
            <person name="Sawada M."/>
            <person name="Horikawa H."/>
            <person name="Haikawa Y."/>
            <person name="Hino Y."/>
            <person name="Yamamoto S."/>
            <person name="Sekine M."/>
            <person name="Baba S."/>
            <person name="Kosugi H."/>
            <person name="Hosoyama A."/>
            <person name="Nagai Y."/>
            <person name="Sakai M."/>
            <person name="Ogura K."/>
            <person name="Otsuka R."/>
            <person name="Nakazawa H."/>
            <person name="Takamiya M."/>
            <person name="Ohfuku Y."/>
            <person name="Funahashi T."/>
            <person name="Tanaka T."/>
            <person name="Kudoh Y."/>
            <person name="Yamazaki J."/>
            <person name="Kushida N."/>
            <person name="Oguchi A."/>
            <person name="Aoki K."/>
            <person name="Yoshizawa T."/>
            <person name="Nakamura Y."/>
            <person name="Robb F.T."/>
            <person name="Horikoshi K."/>
            <person name="Masuchi Y."/>
            <person name="Shizuya H."/>
            <person name="Kikuchi H."/>
        </authorList>
    </citation>
    <scope>NUCLEOTIDE SEQUENCE [LARGE SCALE GENOMIC DNA]</scope>
    <source>
        <strain>ATCC 700860 / DSM 12428 / JCM 9974 / NBRC 100139 / OT-3</strain>
    </source>
</reference>
<dbReference type="EMBL" id="BA000001">
    <property type="protein sequence ID" value="BAA30099.1"/>
    <property type="molecule type" value="Genomic_DNA"/>
</dbReference>
<dbReference type="PIR" id="E71092">
    <property type="entry name" value="E71092"/>
</dbReference>
<dbReference type="RefSeq" id="WP_048053275.1">
    <property type="nucleotide sequence ID" value="NC_000961.1"/>
</dbReference>
<dbReference type="STRING" id="70601.gene:9377958"/>
<dbReference type="EnsemblBacteria" id="BAA30099">
    <property type="protein sequence ID" value="BAA30099"/>
    <property type="gene ID" value="BAA30099"/>
</dbReference>
<dbReference type="GeneID" id="1443324"/>
<dbReference type="KEGG" id="pho:PH1002"/>
<dbReference type="eggNOG" id="arCOG00969">
    <property type="taxonomic scope" value="Archaea"/>
</dbReference>
<dbReference type="OrthoDB" id="21331at2157"/>
<dbReference type="Proteomes" id="UP000000752">
    <property type="component" value="Chromosome"/>
</dbReference>
<dbReference type="Gene3D" id="3.60.15.10">
    <property type="entry name" value="Ribonuclease Z/Hydroxyacylglutathione hydrolase-like"/>
    <property type="match status" value="1"/>
</dbReference>
<dbReference type="HAMAP" id="MF_01406">
    <property type="entry name" value="UPF0282"/>
    <property type="match status" value="1"/>
</dbReference>
<dbReference type="InterPro" id="IPR001279">
    <property type="entry name" value="Metallo-B-lactamas"/>
</dbReference>
<dbReference type="InterPro" id="IPR036866">
    <property type="entry name" value="RibonucZ/Hydroxyglut_hydro"/>
</dbReference>
<dbReference type="InterPro" id="IPR050114">
    <property type="entry name" value="UPF0173_UPF0282_UlaG_hydrolase"/>
</dbReference>
<dbReference type="InterPro" id="IPR014426">
    <property type="entry name" value="UPF0282_hydrls"/>
</dbReference>
<dbReference type="NCBIfam" id="NF003290">
    <property type="entry name" value="PRK04286.1-6"/>
    <property type="match status" value="1"/>
</dbReference>
<dbReference type="PANTHER" id="PTHR43546">
    <property type="entry name" value="UPF0173 METAL-DEPENDENT HYDROLASE MJ1163-RELATED"/>
    <property type="match status" value="1"/>
</dbReference>
<dbReference type="PANTHER" id="PTHR43546:SF4">
    <property type="entry name" value="UPF0282 PROTEIN MJ1629"/>
    <property type="match status" value="1"/>
</dbReference>
<dbReference type="Pfam" id="PF12706">
    <property type="entry name" value="Lactamase_B_2"/>
    <property type="match status" value="1"/>
</dbReference>
<dbReference type="PIRSF" id="PIRSF004944">
    <property type="entry name" value="UCP004944_hydrls"/>
    <property type="match status" value="1"/>
</dbReference>
<dbReference type="SUPFAM" id="SSF56281">
    <property type="entry name" value="Metallo-hydrolase/oxidoreductase"/>
    <property type="match status" value="1"/>
</dbReference>
<gene>
    <name type="ordered locus">PH1002</name>
</gene>
<sequence>MKVIPLASESLGVRSLALFLKIGKVGILIDPGVALGPKRYALPPAQAEMKALSLAREKIQEYAKKAQIVTISHYHYDHHTPFFEGIYESSSVEKAREIYAGKLLLIKHPTENINNSQKKRAHEFLKNAKEIAKDIKFADSQSFDFGSFTIEFSPPVPHGREGSKLGYVLMVLVDDGKKSVLHASDTQLINDKAVEWIIEKNPDILIAGGPPTYLAHRVGNVKEIGMKNINRIISETNAKIVLDHHIIRDKGYERFFSELDERPLTFAEFLGKESAPLEAYRRELHKLEKGEEVEVPGGIKKFLKGLK</sequence>
<proteinExistence type="inferred from homology"/>
<accession>O58730</accession>
<evidence type="ECO:0000255" key="1">
    <source>
        <dbReference type="HAMAP-Rule" id="MF_01406"/>
    </source>
</evidence>
<feature type="chain" id="PRO_0000057637" description="UPF0282 protein PH1002">
    <location>
        <begin position="1"/>
        <end position="307"/>
    </location>
</feature>
<organism>
    <name type="scientific">Pyrococcus horikoshii (strain ATCC 700860 / DSM 12428 / JCM 9974 / NBRC 100139 / OT-3)</name>
    <dbReference type="NCBI Taxonomy" id="70601"/>
    <lineage>
        <taxon>Archaea</taxon>
        <taxon>Methanobacteriati</taxon>
        <taxon>Methanobacteriota</taxon>
        <taxon>Thermococci</taxon>
        <taxon>Thermococcales</taxon>
        <taxon>Thermococcaceae</taxon>
        <taxon>Pyrococcus</taxon>
    </lineage>
</organism>
<comment type="similarity">
    <text evidence="1">Belongs to the UPF0282 family.</text>
</comment>
<protein>
    <recommendedName>
        <fullName evidence="1">UPF0282 protein PH1002</fullName>
    </recommendedName>
</protein>
<name>Y1002_PYRHO</name>